<sequence length="243" mass="27257">MTQTHFGYQTVDEQEKAKKVAGVFHSVASNYDLMNDLMSGGLHRAWKAFTIAQANVRPGYKVLDIAGGTGDLSKAFAKRAGETGEVWHTDINESMLRVGRDRLIDKGVITPTLLCDAEKIPFPDNYFDVVTVAFGLRNMTHKDAALAEMRRVLKPAGRLLVLEFSKVWDPLKKAYDVYSFKVLPWLGDRFAKDADSYRYLAESIRMHPDQETLKTMMEQAGLDAVKYYNLSAGVVALHVGTKY</sequence>
<name>UBIE_PARP8</name>
<dbReference type="EC" id="2.1.1.163" evidence="1"/>
<dbReference type="EC" id="2.1.1.201" evidence="1"/>
<dbReference type="EMBL" id="CP001043">
    <property type="protein sequence ID" value="ACC69567.1"/>
    <property type="molecule type" value="Genomic_DNA"/>
</dbReference>
<dbReference type="RefSeq" id="WP_012399793.1">
    <property type="nucleotide sequence ID" value="NC_010622.1"/>
</dbReference>
<dbReference type="SMR" id="B2JCU8"/>
<dbReference type="STRING" id="391038.Bphy_0374"/>
<dbReference type="KEGG" id="bph:Bphy_0374"/>
<dbReference type="eggNOG" id="COG2226">
    <property type="taxonomic scope" value="Bacteria"/>
</dbReference>
<dbReference type="HOGENOM" id="CLU_037990_0_0_4"/>
<dbReference type="OrthoDB" id="9808140at2"/>
<dbReference type="UniPathway" id="UPA00079">
    <property type="reaction ID" value="UER00169"/>
</dbReference>
<dbReference type="UniPathway" id="UPA00232"/>
<dbReference type="Proteomes" id="UP000001192">
    <property type="component" value="Chromosome 1"/>
</dbReference>
<dbReference type="GO" id="GO:0008425">
    <property type="term" value="F:2-methoxy-6-polyprenyl-1,4-benzoquinol methyltransferase activity"/>
    <property type="evidence" value="ECO:0007669"/>
    <property type="project" value="UniProtKB-UniRule"/>
</dbReference>
<dbReference type="GO" id="GO:0043770">
    <property type="term" value="F:demethylmenaquinone methyltransferase activity"/>
    <property type="evidence" value="ECO:0007669"/>
    <property type="project" value="UniProtKB-UniRule"/>
</dbReference>
<dbReference type="GO" id="GO:0009060">
    <property type="term" value="P:aerobic respiration"/>
    <property type="evidence" value="ECO:0007669"/>
    <property type="project" value="UniProtKB-UniRule"/>
</dbReference>
<dbReference type="GO" id="GO:0009234">
    <property type="term" value="P:menaquinone biosynthetic process"/>
    <property type="evidence" value="ECO:0007669"/>
    <property type="project" value="UniProtKB-UniRule"/>
</dbReference>
<dbReference type="GO" id="GO:0032259">
    <property type="term" value="P:methylation"/>
    <property type="evidence" value="ECO:0007669"/>
    <property type="project" value="UniProtKB-KW"/>
</dbReference>
<dbReference type="CDD" id="cd02440">
    <property type="entry name" value="AdoMet_MTases"/>
    <property type="match status" value="1"/>
</dbReference>
<dbReference type="Gene3D" id="3.40.50.150">
    <property type="entry name" value="Vaccinia Virus protein VP39"/>
    <property type="match status" value="1"/>
</dbReference>
<dbReference type="HAMAP" id="MF_01813">
    <property type="entry name" value="MenG_UbiE_methyltr"/>
    <property type="match status" value="1"/>
</dbReference>
<dbReference type="InterPro" id="IPR029063">
    <property type="entry name" value="SAM-dependent_MTases_sf"/>
</dbReference>
<dbReference type="InterPro" id="IPR004033">
    <property type="entry name" value="UbiE/COQ5_MeTrFase"/>
</dbReference>
<dbReference type="InterPro" id="IPR023576">
    <property type="entry name" value="UbiE/COQ5_MeTrFase_CS"/>
</dbReference>
<dbReference type="NCBIfam" id="TIGR01934">
    <property type="entry name" value="MenG_MenH_UbiE"/>
    <property type="match status" value="1"/>
</dbReference>
<dbReference type="NCBIfam" id="NF001240">
    <property type="entry name" value="PRK00216.1-1"/>
    <property type="match status" value="1"/>
</dbReference>
<dbReference type="PANTHER" id="PTHR43591:SF24">
    <property type="entry name" value="2-METHOXY-6-POLYPRENYL-1,4-BENZOQUINOL METHYLASE, MITOCHONDRIAL"/>
    <property type="match status" value="1"/>
</dbReference>
<dbReference type="PANTHER" id="PTHR43591">
    <property type="entry name" value="METHYLTRANSFERASE"/>
    <property type="match status" value="1"/>
</dbReference>
<dbReference type="Pfam" id="PF01209">
    <property type="entry name" value="Ubie_methyltran"/>
    <property type="match status" value="1"/>
</dbReference>
<dbReference type="SUPFAM" id="SSF53335">
    <property type="entry name" value="S-adenosyl-L-methionine-dependent methyltransferases"/>
    <property type="match status" value="1"/>
</dbReference>
<dbReference type="PROSITE" id="PS51608">
    <property type="entry name" value="SAM_MT_UBIE"/>
    <property type="match status" value="1"/>
</dbReference>
<dbReference type="PROSITE" id="PS01183">
    <property type="entry name" value="UBIE_1"/>
    <property type="match status" value="1"/>
</dbReference>
<gene>
    <name evidence="1" type="primary">ubiE</name>
    <name type="ordered locus">Bphy_0374</name>
</gene>
<comment type="function">
    <text evidence="1">Methyltransferase required for the conversion of demethylmenaquinol (DMKH2) to menaquinol (MKH2) and the conversion of 2-polyprenyl-6-methoxy-1,4-benzoquinol (DDMQH2) to 2-polyprenyl-3-methyl-6-methoxy-1,4-benzoquinol (DMQH2).</text>
</comment>
<comment type="catalytic activity">
    <reaction evidence="1">
        <text>a 2-demethylmenaquinol + S-adenosyl-L-methionine = a menaquinol + S-adenosyl-L-homocysteine + H(+)</text>
        <dbReference type="Rhea" id="RHEA:42640"/>
        <dbReference type="Rhea" id="RHEA-COMP:9539"/>
        <dbReference type="Rhea" id="RHEA-COMP:9563"/>
        <dbReference type="ChEBI" id="CHEBI:15378"/>
        <dbReference type="ChEBI" id="CHEBI:18151"/>
        <dbReference type="ChEBI" id="CHEBI:55437"/>
        <dbReference type="ChEBI" id="CHEBI:57856"/>
        <dbReference type="ChEBI" id="CHEBI:59789"/>
        <dbReference type="EC" id="2.1.1.163"/>
    </reaction>
</comment>
<comment type="catalytic activity">
    <reaction evidence="1">
        <text>a 2-methoxy-6-(all-trans-polyprenyl)benzene-1,4-diol + S-adenosyl-L-methionine = a 5-methoxy-2-methyl-3-(all-trans-polyprenyl)benzene-1,4-diol + S-adenosyl-L-homocysteine + H(+)</text>
        <dbReference type="Rhea" id="RHEA:28286"/>
        <dbReference type="Rhea" id="RHEA-COMP:10858"/>
        <dbReference type="Rhea" id="RHEA-COMP:10859"/>
        <dbReference type="ChEBI" id="CHEBI:15378"/>
        <dbReference type="ChEBI" id="CHEBI:57856"/>
        <dbReference type="ChEBI" id="CHEBI:59789"/>
        <dbReference type="ChEBI" id="CHEBI:84166"/>
        <dbReference type="ChEBI" id="CHEBI:84167"/>
        <dbReference type="EC" id="2.1.1.201"/>
    </reaction>
</comment>
<comment type="pathway">
    <text evidence="1">Quinol/quinone metabolism; menaquinone biosynthesis; menaquinol from 1,4-dihydroxy-2-naphthoate: step 2/2.</text>
</comment>
<comment type="pathway">
    <text evidence="1">Cofactor biosynthesis; ubiquinone biosynthesis.</text>
</comment>
<comment type="similarity">
    <text evidence="1">Belongs to the class I-like SAM-binding methyltransferase superfamily. MenG/UbiE family.</text>
</comment>
<proteinExistence type="inferred from homology"/>
<organism>
    <name type="scientific">Paraburkholderia phymatum (strain DSM 17167 / CIP 108236 / LMG 21445 / STM815)</name>
    <name type="common">Burkholderia phymatum</name>
    <dbReference type="NCBI Taxonomy" id="391038"/>
    <lineage>
        <taxon>Bacteria</taxon>
        <taxon>Pseudomonadati</taxon>
        <taxon>Pseudomonadota</taxon>
        <taxon>Betaproteobacteria</taxon>
        <taxon>Burkholderiales</taxon>
        <taxon>Burkholderiaceae</taxon>
        <taxon>Paraburkholderia</taxon>
    </lineage>
</organism>
<protein>
    <recommendedName>
        <fullName evidence="1">Ubiquinone/menaquinone biosynthesis C-methyltransferase UbiE</fullName>
        <ecNumber evidence="1">2.1.1.163</ecNumber>
        <ecNumber evidence="1">2.1.1.201</ecNumber>
    </recommendedName>
    <alternativeName>
        <fullName evidence="1">2-methoxy-6-polyprenyl-1,4-benzoquinol methylase</fullName>
    </alternativeName>
    <alternativeName>
        <fullName evidence="1">Demethylmenaquinone methyltransferase</fullName>
    </alternativeName>
</protein>
<evidence type="ECO:0000255" key="1">
    <source>
        <dbReference type="HAMAP-Rule" id="MF_01813"/>
    </source>
</evidence>
<keyword id="KW-0474">Menaquinone biosynthesis</keyword>
<keyword id="KW-0489">Methyltransferase</keyword>
<keyword id="KW-1185">Reference proteome</keyword>
<keyword id="KW-0949">S-adenosyl-L-methionine</keyword>
<keyword id="KW-0808">Transferase</keyword>
<keyword id="KW-0831">Ubiquinone biosynthesis</keyword>
<feature type="chain" id="PRO_1000187740" description="Ubiquinone/menaquinone biosynthesis C-methyltransferase UbiE">
    <location>
        <begin position="1"/>
        <end position="243"/>
    </location>
</feature>
<feature type="binding site" evidence="1">
    <location>
        <position position="69"/>
    </location>
    <ligand>
        <name>S-adenosyl-L-methionine</name>
        <dbReference type="ChEBI" id="CHEBI:59789"/>
    </ligand>
</feature>
<feature type="binding site" evidence="1">
    <location>
        <position position="90"/>
    </location>
    <ligand>
        <name>S-adenosyl-L-methionine</name>
        <dbReference type="ChEBI" id="CHEBI:59789"/>
    </ligand>
</feature>
<feature type="binding site" evidence="1">
    <location>
        <begin position="116"/>
        <end position="117"/>
    </location>
    <ligand>
        <name>S-adenosyl-L-methionine</name>
        <dbReference type="ChEBI" id="CHEBI:59789"/>
    </ligand>
</feature>
<accession>B2JCU8</accession>
<reference key="1">
    <citation type="journal article" date="2014" name="Stand. Genomic Sci.">
        <title>Complete genome sequence of Burkholderia phymatum STM815(T), a broad host range and efficient nitrogen-fixing symbiont of Mimosa species.</title>
        <authorList>
            <person name="Moulin L."/>
            <person name="Klonowska A."/>
            <person name="Caroline B."/>
            <person name="Booth K."/>
            <person name="Vriezen J.A."/>
            <person name="Melkonian R."/>
            <person name="James E.K."/>
            <person name="Young J.P."/>
            <person name="Bena G."/>
            <person name="Hauser L."/>
            <person name="Land M."/>
            <person name="Kyrpides N."/>
            <person name="Bruce D."/>
            <person name="Chain P."/>
            <person name="Copeland A."/>
            <person name="Pitluck S."/>
            <person name="Woyke T."/>
            <person name="Lizotte-Waniewski M."/>
            <person name="Bristow J."/>
            <person name="Riley M."/>
        </authorList>
    </citation>
    <scope>NUCLEOTIDE SEQUENCE [LARGE SCALE GENOMIC DNA]</scope>
    <source>
        <strain>DSM 17167 / CIP 108236 / LMG 21445 / STM815</strain>
    </source>
</reference>